<proteinExistence type="inferred from homology"/>
<accession>A4VHP4</accession>
<dbReference type="EMBL" id="CP000304">
    <property type="protein sequence ID" value="ABP78495.1"/>
    <property type="molecule type" value="Genomic_DNA"/>
</dbReference>
<dbReference type="RefSeq" id="WP_011911993.1">
    <property type="nucleotide sequence ID" value="NC_009434.1"/>
</dbReference>
<dbReference type="SMR" id="A4VHP4"/>
<dbReference type="GeneID" id="66819940"/>
<dbReference type="KEGG" id="psa:PST_0798"/>
<dbReference type="eggNOG" id="COG0096">
    <property type="taxonomic scope" value="Bacteria"/>
</dbReference>
<dbReference type="HOGENOM" id="CLU_098428_0_0_6"/>
<dbReference type="Proteomes" id="UP000000233">
    <property type="component" value="Chromosome"/>
</dbReference>
<dbReference type="GO" id="GO:1990904">
    <property type="term" value="C:ribonucleoprotein complex"/>
    <property type="evidence" value="ECO:0007669"/>
    <property type="project" value="UniProtKB-KW"/>
</dbReference>
<dbReference type="GO" id="GO:0005840">
    <property type="term" value="C:ribosome"/>
    <property type="evidence" value="ECO:0007669"/>
    <property type="project" value="UniProtKB-KW"/>
</dbReference>
<dbReference type="GO" id="GO:0019843">
    <property type="term" value="F:rRNA binding"/>
    <property type="evidence" value="ECO:0007669"/>
    <property type="project" value="UniProtKB-UniRule"/>
</dbReference>
<dbReference type="GO" id="GO:0003735">
    <property type="term" value="F:structural constituent of ribosome"/>
    <property type="evidence" value="ECO:0007669"/>
    <property type="project" value="InterPro"/>
</dbReference>
<dbReference type="GO" id="GO:0006412">
    <property type="term" value="P:translation"/>
    <property type="evidence" value="ECO:0007669"/>
    <property type="project" value="UniProtKB-UniRule"/>
</dbReference>
<dbReference type="FunFam" id="3.30.1370.30:FF:000003">
    <property type="entry name" value="30S ribosomal protein S8"/>
    <property type="match status" value="1"/>
</dbReference>
<dbReference type="FunFam" id="3.30.1490.10:FF:000001">
    <property type="entry name" value="30S ribosomal protein S8"/>
    <property type="match status" value="1"/>
</dbReference>
<dbReference type="Gene3D" id="3.30.1370.30">
    <property type="match status" value="1"/>
</dbReference>
<dbReference type="Gene3D" id="3.30.1490.10">
    <property type="match status" value="1"/>
</dbReference>
<dbReference type="HAMAP" id="MF_01302_B">
    <property type="entry name" value="Ribosomal_uS8_B"/>
    <property type="match status" value="1"/>
</dbReference>
<dbReference type="InterPro" id="IPR000630">
    <property type="entry name" value="Ribosomal_uS8"/>
</dbReference>
<dbReference type="InterPro" id="IPR047863">
    <property type="entry name" value="Ribosomal_uS8_CS"/>
</dbReference>
<dbReference type="InterPro" id="IPR035987">
    <property type="entry name" value="Ribosomal_uS8_sf"/>
</dbReference>
<dbReference type="NCBIfam" id="NF001109">
    <property type="entry name" value="PRK00136.1"/>
    <property type="match status" value="1"/>
</dbReference>
<dbReference type="PANTHER" id="PTHR11758">
    <property type="entry name" value="40S RIBOSOMAL PROTEIN S15A"/>
    <property type="match status" value="1"/>
</dbReference>
<dbReference type="Pfam" id="PF00410">
    <property type="entry name" value="Ribosomal_S8"/>
    <property type="match status" value="1"/>
</dbReference>
<dbReference type="SUPFAM" id="SSF56047">
    <property type="entry name" value="Ribosomal protein S8"/>
    <property type="match status" value="1"/>
</dbReference>
<dbReference type="PROSITE" id="PS00053">
    <property type="entry name" value="RIBOSOMAL_S8"/>
    <property type="match status" value="1"/>
</dbReference>
<evidence type="ECO:0000255" key="1">
    <source>
        <dbReference type="HAMAP-Rule" id="MF_01302"/>
    </source>
</evidence>
<evidence type="ECO:0000305" key="2"/>
<comment type="function">
    <text evidence="1">One of the primary rRNA binding proteins, it binds directly to 16S rRNA central domain where it helps coordinate assembly of the platform of the 30S subunit.</text>
</comment>
<comment type="subunit">
    <text evidence="1">Part of the 30S ribosomal subunit. Contacts proteins S5 and S12.</text>
</comment>
<comment type="similarity">
    <text evidence="1">Belongs to the universal ribosomal protein uS8 family.</text>
</comment>
<keyword id="KW-1185">Reference proteome</keyword>
<keyword id="KW-0687">Ribonucleoprotein</keyword>
<keyword id="KW-0689">Ribosomal protein</keyword>
<keyword id="KW-0694">RNA-binding</keyword>
<keyword id="KW-0699">rRNA-binding</keyword>
<gene>
    <name evidence="1" type="primary">rpsH</name>
    <name type="ordered locus">PST_0798</name>
</gene>
<organism>
    <name type="scientific">Stutzerimonas stutzeri (strain A1501)</name>
    <name type="common">Pseudomonas stutzeri</name>
    <dbReference type="NCBI Taxonomy" id="379731"/>
    <lineage>
        <taxon>Bacteria</taxon>
        <taxon>Pseudomonadati</taxon>
        <taxon>Pseudomonadota</taxon>
        <taxon>Gammaproteobacteria</taxon>
        <taxon>Pseudomonadales</taxon>
        <taxon>Pseudomonadaceae</taxon>
        <taxon>Stutzerimonas</taxon>
    </lineage>
</organism>
<sequence length="130" mass="13999">MSMQDPLADMLTRIRNAQMAEKSVVSMPSSTLKVAVANVLQGEGYIAGYQVSGDVKPQLSIELKYFEGRPVIEELKRVSRPGLRQYKSVDQLPKVRGGLGVSIVSTNKGVMTDRAARAAGVGGEVLCTVF</sequence>
<name>RS8_STUS1</name>
<feature type="chain" id="PRO_0000305755" description="Small ribosomal subunit protein uS8">
    <location>
        <begin position="1"/>
        <end position="130"/>
    </location>
</feature>
<protein>
    <recommendedName>
        <fullName evidence="1">Small ribosomal subunit protein uS8</fullName>
    </recommendedName>
    <alternativeName>
        <fullName evidence="2">30S ribosomal protein S8</fullName>
    </alternativeName>
</protein>
<reference key="1">
    <citation type="journal article" date="2008" name="Proc. Natl. Acad. Sci. U.S.A.">
        <title>Nitrogen fixation island and rhizosphere competence traits in the genome of root-associated Pseudomonas stutzeri A1501.</title>
        <authorList>
            <person name="Yan Y."/>
            <person name="Yang J."/>
            <person name="Dou Y."/>
            <person name="Chen M."/>
            <person name="Ping S."/>
            <person name="Peng J."/>
            <person name="Lu W."/>
            <person name="Zhang W."/>
            <person name="Yao Z."/>
            <person name="Li H."/>
            <person name="Liu W."/>
            <person name="He S."/>
            <person name="Geng L."/>
            <person name="Zhang X."/>
            <person name="Yang F."/>
            <person name="Yu H."/>
            <person name="Zhan Y."/>
            <person name="Li D."/>
            <person name="Lin Z."/>
            <person name="Wang Y."/>
            <person name="Elmerich C."/>
            <person name="Lin M."/>
            <person name="Jin Q."/>
        </authorList>
    </citation>
    <scope>NUCLEOTIDE SEQUENCE [LARGE SCALE GENOMIC DNA]</scope>
    <source>
        <strain>A1501</strain>
    </source>
</reference>